<feature type="chain" id="PRO_0000083752" description="3-isopropylmalate dehydrogenase">
    <location>
        <begin position="1"/>
        <end position="348"/>
    </location>
</feature>
<feature type="binding site" evidence="1">
    <location>
        <begin position="76"/>
        <end position="87"/>
    </location>
    <ligand>
        <name>NAD(+)</name>
        <dbReference type="ChEBI" id="CHEBI:57540"/>
    </ligand>
</feature>
<feature type="binding site" evidence="1">
    <location>
        <position position="94"/>
    </location>
    <ligand>
        <name>substrate</name>
    </ligand>
</feature>
<feature type="binding site" evidence="1">
    <location>
        <position position="104"/>
    </location>
    <ligand>
        <name>substrate</name>
    </ligand>
</feature>
<feature type="binding site" evidence="1">
    <location>
        <position position="132"/>
    </location>
    <ligand>
        <name>substrate</name>
    </ligand>
</feature>
<feature type="binding site" evidence="1">
    <location>
        <position position="217"/>
    </location>
    <ligand>
        <name>Mg(2+)</name>
        <dbReference type="ChEBI" id="CHEBI:18420"/>
    </ligand>
</feature>
<feature type="binding site" evidence="1">
    <location>
        <position position="217"/>
    </location>
    <ligand>
        <name>substrate</name>
    </ligand>
</feature>
<feature type="binding site" evidence="1">
    <location>
        <position position="241"/>
    </location>
    <ligand>
        <name>Mg(2+)</name>
        <dbReference type="ChEBI" id="CHEBI:18420"/>
    </ligand>
</feature>
<feature type="binding site" evidence="1">
    <location>
        <position position="245"/>
    </location>
    <ligand>
        <name>Mg(2+)</name>
        <dbReference type="ChEBI" id="CHEBI:18420"/>
    </ligand>
</feature>
<feature type="binding site" evidence="1">
    <location>
        <begin position="275"/>
        <end position="287"/>
    </location>
    <ligand>
        <name>NAD(+)</name>
        <dbReference type="ChEBI" id="CHEBI:57540"/>
    </ligand>
</feature>
<feature type="site" description="Important for catalysis" evidence="1">
    <location>
        <position position="139"/>
    </location>
</feature>
<feature type="site" description="Important for catalysis" evidence="1">
    <location>
        <position position="185"/>
    </location>
</feature>
<dbReference type="EC" id="1.1.1.85" evidence="1"/>
<dbReference type="EMBL" id="BX571856">
    <property type="protein sequence ID" value="CAG41126.1"/>
    <property type="molecule type" value="Genomic_DNA"/>
</dbReference>
<dbReference type="RefSeq" id="WP_000221937.1">
    <property type="nucleotide sequence ID" value="NC_002952.2"/>
</dbReference>
<dbReference type="SMR" id="Q6GF15"/>
<dbReference type="KEGG" id="sar:SAR2145"/>
<dbReference type="HOGENOM" id="CLU_031953_0_3_9"/>
<dbReference type="UniPathway" id="UPA00048">
    <property type="reaction ID" value="UER00072"/>
</dbReference>
<dbReference type="Proteomes" id="UP000000596">
    <property type="component" value="Chromosome"/>
</dbReference>
<dbReference type="GO" id="GO:0005829">
    <property type="term" value="C:cytosol"/>
    <property type="evidence" value="ECO:0007669"/>
    <property type="project" value="TreeGrafter"/>
</dbReference>
<dbReference type="GO" id="GO:0003862">
    <property type="term" value="F:3-isopropylmalate dehydrogenase activity"/>
    <property type="evidence" value="ECO:0007669"/>
    <property type="project" value="UniProtKB-UniRule"/>
</dbReference>
<dbReference type="GO" id="GO:0000287">
    <property type="term" value="F:magnesium ion binding"/>
    <property type="evidence" value="ECO:0007669"/>
    <property type="project" value="InterPro"/>
</dbReference>
<dbReference type="GO" id="GO:0051287">
    <property type="term" value="F:NAD binding"/>
    <property type="evidence" value="ECO:0007669"/>
    <property type="project" value="InterPro"/>
</dbReference>
<dbReference type="GO" id="GO:0009098">
    <property type="term" value="P:L-leucine biosynthetic process"/>
    <property type="evidence" value="ECO:0007669"/>
    <property type="project" value="UniProtKB-UniRule"/>
</dbReference>
<dbReference type="FunFam" id="3.40.718.10:FF:000006">
    <property type="entry name" value="3-isopropylmalate dehydrogenase"/>
    <property type="match status" value="1"/>
</dbReference>
<dbReference type="Gene3D" id="3.40.718.10">
    <property type="entry name" value="Isopropylmalate Dehydrogenase"/>
    <property type="match status" value="1"/>
</dbReference>
<dbReference type="HAMAP" id="MF_01033">
    <property type="entry name" value="LeuB_type1"/>
    <property type="match status" value="1"/>
</dbReference>
<dbReference type="InterPro" id="IPR019818">
    <property type="entry name" value="IsoCit/isopropylmalate_DH_CS"/>
</dbReference>
<dbReference type="InterPro" id="IPR024084">
    <property type="entry name" value="IsoPropMal-DH-like_dom"/>
</dbReference>
<dbReference type="InterPro" id="IPR004429">
    <property type="entry name" value="Isopropylmalate_DH"/>
</dbReference>
<dbReference type="NCBIfam" id="TIGR00169">
    <property type="entry name" value="leuB"/>
    <property type="match status" value="1"/>
</dbReference>
<dbReference type="PANTHER" id="PTHR42979">
    <property type="entry name" value="3-ISOPROPYLMALATE DEHYDROGENASE"/>
    <property type="match status" value="1"/>
</dbReference>
<dbReference type="PANTHER" id="PTHR42979:SF1">
    <property type="entry name" value="3-ISOPROPYLMALATE DEHYDROGENASE"/>
    <property type="match status" value="1"/>
</dbReference>
<dbReference type="Pfam" id="PF00180">
    <property type="entry name" value="Iso_dh"/>
    <property type="match status" value="1"/>
</dbReference>
<dbReference type="SMART" id="SM01329">
    <property type="entry name" value="Iso_dh"/>
    <property type="match status" value="1"/>
</dbReference>
<dbReference type="SUPFAM" id="SSF53659">
    <property type="entry name" value="Isocitrate/Isopropylmalate dehydrogenase-like"/>
    <property type="match status" value="1"/>
</dbReference>
<dbReference type="PROSITE" id="PS00470">
    <property type="entry name" value="IDH_IMDH"/>
    <property type="match status" value="1"/>
</dbReference>
<keyword id="KW-0028">Amino-acid biosynthesis</keyword>
<keyword id="KW-0100">Branched-chain amino acid biosynthesis</keyword>
<keyword id="KW-0963">Cytoplasm</keyword>
<keyword id="KW-0432">Leucine biosynthesis</keyword>
<keyword id="KW-0460">Magnesium</keyword>
<keyword id="KW-0464">Manganese</keyword>
<keyword id="KW-0479">Metal-binding</keyword>
<keyword id="KW-0520">NAD</keyword>
<keyword id="KW-0560">Oxidoreductase</keyword>
<sequence>MTYNIVALPGDGIGPEILNGSLSLLEIISNKYNFNYQIEHHEFGGASIDTFGEPLTEKTLNACKRADAILLGAIGGPKWTDPNNRPEQGLLKLRKSLNLFANIRPTTVVKGASSLSPLKAERVEGTDLVIVRELTSGIYFGEPRYFNNHEALDSLTYTREEIERIVHVAFKLAASRRGKLTSVDKENVLASSKLWRKVVNEVSQLYPEVTVNHLLVDACSMHLITNPKQFDVIVYENLFGDILSDEASVIPGSLGLSPSASFSNDGPRLYEPIHGSAPDIAGKNVANPFGMILSLAMCLRESLNQPDAADELEQHIYNMIEHGQTTADLGGKLNTTDIFEILSQKLNH</sequence>
<organism>
    <name type="scientific">Staphylococcus aureus (strain MRSA252)</name>
    <dbReference type="NCBI Taxonomy" id="282458"/>
    <lineage>
        <taxon>Bacteria</taxon>
        <taxon>Bacillati</taxon>
        <taxon>Bacillota</taxon>
        <taxon>Bacilli</taxon>
        <taxon>Bacillales</taxon>
        <taxon>Staphylococcaceae</taxon>
        <taxon>Staphylococcus</taxon>
    </lineage>
</organism>
<protein>
    <recommendedName>
        <fullName evidence="1">3-isopropylmalate dehydrogenase</fullName>
        <ecNumber evidence="1">1.1.1.85</ecNumber>
    </recommendedName>
    <alternativeName>
        <fullName evidence="1">3-IPM-DH</fullName>
    </alternativeName>
    <alternativeName>
        <fullName evidence="1">Beta-IPM dehydrogenase</fullName>
        <shortName evidence="1">IMDH</shortName>
    </alternativeName>
</protein>
<reference key="1">
    <citation type="journal article" date="2004" name="Proc. Natl. Acad. Sci. U.S.A.">
        <title>Complete genomes of two clinical Staphylococcus aureus strains: evidence for the rapid evolution of virulence and drug resistance.</title>
        <authorList>
            <person name="Holden M.T.G."/>
            <person name="Feil E.J."/>
            <person name="Lindsay J.A."/>
            <person name="Peacock S.J."/>
            <person name="Day N.P.J."/>
            <person name="Enright M.C."/>
            <person name="Foster T.J."/>
            <person name="Moore C.E."/>
            <person name="Hurst L."/>
            <person name="Atkin R."/>
            <person name="Barron A."/>
            <person name="Bason N."/>
            <person name="Bentley S.D."/>
            <person name="Chillingworth C."/>
            <person name="Chillingworth T."/>
            <person name="Churcher C."/>
            <person name="Clark L."/>
            <person name="Corton C."/>
            <person name="Cronin A."/>
            <person name="Doggett J."/>
            <person name="Dowd L."/>
            <person name="Feltwell T."/>
            <person name="Hance Z."/>
            <person name="Harris B."/>
            <person name="Hauser H."/>
            <person name="Holroyd S."/>
            <person name="Jagels K."/>
            <person name="James K.D."/>
            <person name="Lennard N."/>
            <person name="Line A."/>
            <person name="Mayes R."/>
            <person name="Moule S."/>
            <person name="Mungall K."/>
            <person name="Ormond D."/>
            <person name="Quail M.A."/>
            <person name="Rabbinowitsch E."/>
            <person name="Rutherford K.M."/>
            <person name="Sanders M."/>
            <person name="Sharp S."/>
            <person name="Simmonds M."/>
            <person name="Stevens K."/>
            <person name="Whitehead S."/>
            <person name="Barrell B.G."/>
            <person name="Spratt B.G."/>
            <person name="Parkhill J."/>
        </authorList>
    </citation>
    <scope>NUCLEOTIDE SEQUENCE [LARGE SCALE GENOMIC DNA]</scope>
    <source>
        <strain>MRSA252</strain>
    </source>
</reference>
<comment type="function">
    <text evidence="1">Catalyzes the oxidation of 3-carboxy-2-hydroxy-4-methylpentanoate (3-isopropylmalate) to 3-carboxy-4-methyl-2-oxopentanoate. The product decarboxylates to 4-methyl-2 oxopentanoate.</text>
</comment>
<comment type="catalytic activity">
    <reaction evidence="1">
        <text>(2R,3S)-3-isopropylmalate + NAD(+) = 4-methyl-2-oxopentanoate + CO2 + NADH</text>
        <dbReference type="Rhea" id="RHEA:32271"/>
        <dbReference type="ChEBI" id="CHEBI:16526"/>
        <dbReference type="ChEBI" id="CHEBI:17865"/>
        <dbReference type="ChEBI" id="CHEBI:35121"/>
        <dbReference type="ChEBI" id="CHEBI:57540"/>
        <dbReference type="ChEBI" id="CHEBI:57945"/>
        <dbReference type="EC" id="1.1.1.85"/>
    </reaction>
</comment>
<comment type="cofactor">
    <cofactor evidence="1">
        <name>Mg(2+)</name>
        <dbReference type="ChEBI" id="CHEBI:18420"/>
    </cofactor>
    <cofactor evidence="1">
        <name>Mn(2+)</name>
        <dbReference type="ChEBI" id="CHEBI:29035"/>
    </cofactor>
    <text evidence="1">Binds 1 Mg(2+) or Mn(2+) ion per subunit.</text>
</comment>
<comment type="pathway">
    <text evidence="1">Amino-acid biosynthesis; L-leucine biosynthesis; L-leucine from 3-methyl-2-oxobutanoate: step 3/4.</text>
</comment>
<comment type="subunit">
    <text evidence="1">Homodimer.</text>
</comment>
<comment type="subcellular location">
    <subcellularLocation>
        <location evidence="1">Cytoplasm</location>
    </subcellularLocation>
</comment>
<comment type="similarity">
    <text evidence="1">Belongs to the isocitrate and isopropylmalate dehydrogenases family. LeuB type 1 subfamily.</text>
</comment>
<accession>Q6GF15</accession>
<gene>
    <name evidence="1" type="primary">leuB</name>
    <name type="ordered locus">SAR2145</name>
</gene>
<name>LEU3_STAAR</name>
<evidence type="ECO:0000255" key="1">
    <source>
        <dbReference type="HAMAP-Rule" id="MF_01033"/>
    </source>
</evidence>
<proteinExistence type="inferred from homology"/>